<organism>
    <name type="scientific">Wigglesworthia glossinidia brevipalpis</name>
    <dbReference type="NCBI Taxonomy" id="36870"/>
    <lineage>
        <taxon>Bacteria</taxon>
        <taxon>Pseudomonadati</taxon>
        <taxon>Pseudomonadota</taxon>
        <taxon>Gammaproteobacteria</taxon>
        <taxon>Enterobacterales</taxon>
        <taxon>Erwiniaceae</taxon>
        <taxon>Wigglesworthia</taxon>
    </lineage>
</organism>
<accession>Q8D3H2</accession>
<protein>
    <recommendedName>
        <fullName evidence="1">Elongation factor G</fullName>
        <shortName evidence="1">EF-G</shortName>
    </recommendedName>
</protein>
<reference key="1">
    <citation type="journal article" date="2002" name="Nat. Genet.">
        <title>Genome sequence of the endocellular obligate symbiont of tsetse flies, Wigglesworthia glossinidia.</title>
        <authorList>
            <person name="Akman L."/>
            <person name="Yamashita A."/>
            <person name="Watanabe H."/>
            <person name="Oshima K."/>
            <person name="Shiba T."/>
            <person name="Hattori M."/>
            <person name="Aksoy S."/>
        </authorList>
    </citation>
    <scope>NUCLEOTIDE SEQUENCE [LARGE SCALE GENOMIC DNA]</scope>
</reference>
<dbReference type="EMBL" id="BA000021">
    <property type="protein sequence ID" value="BAC24175.1"/>
    <property type="molecule type" value="Genomic_DNA"/>
</dbReference>
<dbReference type="SMR" id="Q8D3H2"/>
<dbReference type="STRING" id="36870.gene:10368507"/>
<dbReference type="KEGG" id="wbr:fusA"/>
<dbReference type="eggNOG" id="COG0480">
    <property type="taxonomic scope" value="Bacteria"/>
</dbReference>
<dbReference type="HOGENOM" id="CLU_002794_4_1_6"/>
<dbReference type="OrthoDB" id="9804431at2"/>
<dbReference type="Proteomes" id="UP000000562">
    <property type="component" value="Chromosome"/>
</dbReference>
<dbReference type="GO" id="GO:0005737">
    <property type="term" value="C:cytoplasm"/>
    <property type="evidence" value="ECO:0007669"/>
    <property type="project" value="UniProtKB-SubCell"/>
</dbReference>
<dbReference type="GO" id="GO:0005525">
    <property type="term" value="F:GTP binding"/>
    <property type="evidence" value="ECO:0007669"/>
    <property type="project" value="UniProtKB-UniRule"/>
</dbReference>
<dbReference type="GO" id="GO:0003924">
    <property type="term" value="F:GTPase activity"/>
    <property type="evidence" value="ECO:0007669"/>
    <property type="project" value="InterPro"/>
</dbReference>
<dbReference type="GO" id="GO:0097216">
    <property type="term" value="F:guanosine tetraphosphate binding"/>
    <property type="evidence" value="ECO:0007669"/>
    <property type="project" value="UniProtKB-ARBA"/>
</dbReference>
<dbReference type="GO" id="GO:0003746">
    <property type="term" value="F:translation elongation factor activity"/>
    <property type="evidence" value="ECO:0007669"/>
    <property type="project" value="UniProtKB-UniRule"/>
</dbReference>
<dbReference type="GO" id="GO:0032790">
    <property type="term" value="P:ribosome disassembly"/>
    <property type="evidence" value="ECO:0007669"/>
    <property type="project" value="TreeGrafter"/>
</dbReference>
<dbReference type="CDD" id="cd01886">
    <property type="entry name" value="EF-G"/>
    <property type="match status" value="1"/>
</dbReference>
<dbReference type="CDD" id="cd16262">
    <property type="entry name" value="EFG_III"/>
    <property type="match status" value="1"/>
</dbReference>
<dbReference type="CDD" id="cd01434">
    <property type="entry name" value="EFG_mtEFG1_IV"/>
    <property type="match status" value="1"/>
</dbReference>
<dbReference type="CDD" id="cd03713">
    <property type="entry name" value="EFG_mtEFG_C"/>
    <property type="match status" value="1"/>
</dbReference>
<dbReference type="CDD" id="cd04088">
    <property type="entry name" value="EFG_mtEFG_II"/>
    <property type="match status" value="1"/>
</dbReference>
<dbReference type="FunFam" id="2.40.30.10:FF:000006">
    <property type="entry name" value="Elongation factor G"/>
    <property type="match status" value="1"/>
</dbReference>
<dbReference type="FunFam" id="3.30.230.10:FF:000003">
    <property type="entry name" value="Elongation factor G"/>
    <property type="match status" value="1"/>
</dbReference>
<dbReference type="FunFam" id="3.30.70.240:FF:000001">
    <property type="entry name" value="Elongation factor G"/>
    <property type="match status" value="1"/>
</dbReference>
<dbReference type="FunFam" id="3.30.70.870:FF:000001">
    <property type="entry name" value="Elongation factor G"/>
    <property type="match status" value="1"/>
</dbReference>
<dbReference type="FunFam" id="3.40.50.300:FF:000029">
    <property type="entry name" value="Elongation factor G"/>
    <property type="match status" value="1"/>
</dbReference>
<dbReference type="Gene3D" id="3.30.230.10">
    <property type="match status" value="1"/>
</dbReference>
<dbReference type="Gene3D" id="3.30.70.240">
    <property type="match status" value="1"/>
</dbReference>
<dbReference type="Gene3D" id="3.30.70.870">
    <property type="entry name" value="Elongation Factor G (Translational Gtpase), domain 3"/>
    <property type="match status" value="1"/>
</dbReference>
<dbReference type="Gene3D" id="3.40.50.300">
    <property type="entry name" value="P-loop containing nucleotide triphosphate hydrolases"/>
    <property type="match status" value="1"/>
</dbReference>
<dbReference type="Gene3D" id="2.40.30.10">
    <property type="entry name" value="Translation factors"/>
    <property type="match status" value="1"/>
</dbReference>
<dbReference type="HAMAP" id="MF_00054_B">
    <property type="entry name" value="EF_G_EF_2_B"/>
    <property type="match status" value="1"/>
</dbReference>
<dbReference type="InterPro" id="IPR041095">
    <property type="entry name" value="EFG_II"/>
</dbReference>
<dbReference type="InterPro" id="IPR009022">
    <property type="entry name" value="EFG_III"/>
</dbReference>
<dbReference type="InterPro" id="IPR035647">
    <property type="entry name" value="EFG_III/V"/>
</dbReference>
<dbReference type="InterPro" id="IPR047872">
    <property type="entry name" value="EFG_IV"/>
</dbReference>
<dbReference type="InterPro" id="IPR035649">
    <property type="entry name" value="EFG_V"/>
</dbReference>
<dbReference type="InterPro" id="IPR000640">
    <property type="entry name" value="EFG_V-like"/>
</dbReference>
<dbReference type="InterPro" id="IPR004161">
    <property type="entry name" value="EFTu-like_2"/>
</dbReference>
<dbReference type="InterPro" id="IPR031157">
    <property type="entry name" value="G_TR_CS"/>
</dbReference>
<dbReference type="InterPro" id="IPR027417">
    <property type="entry name" value="P-loop_NTPase"/>
</dbReference>
<dbReference type="InterPro" id="IPR020568">
    <property type="entry name" value="Ribosomal_Su5_D2-typ_SF"/>
</dbReference>
<dbReference type="InterPro" id="IPR014721">
    <property type="entry name" value="Ribsml_uS5_D2-typ_fold_subgr"/>
</dbReference>
<dbReference type="InterPro" id="IPR005225">
    <property type="entry name" value="Small_GTP-bd"/>
</dbReference>
<dbReference type="InterPro" id="IPR000795">
    <property type="entry name" value="T_Tr_GTP-bd_dom"/>
</dbReference>
<dbReference type="InterPro" id="IPR009000">
    <property type="entry name" value="Transl_B-barrel_sf"/>
</dbReference>
<dbReference type="InterPro" id="IPR004540">
    <property type="entry name" value="Transl_elong_EFG/EF2"/>
</dbReference>
<dbReference type="InterPro" id="IPR005517">
    <property type="entry name" value="Transl_elong_EFG/EF2_IV"/>
</dbReference>
<dbReference type="NCBIfam" id="TIGR00484">
    <property type="entry name" value="EF-G"/>
    <property type="match status" value="1"/>
</dbReference>
<dbReference type="NCBIfam" id="NF009381">
    <property type="entry name" value="PRK12740.1-5"/>
    <property type="match status" value="1"/>
</dbReference>
<dbReference type="NCBIfam" id="TIGR00231">
    <property type="entry name" value="small_GTP"/>
    <property type="match status" value="1"/>
</dbReference>
<dbReference type="PANTHER" id="PTHR43261:SF1">
    <property type="entry name" value="RIBOSOME-RELEASING FACTOR 2, MITOCHONDRIAL"/>
    <property type="match status" value="1"/>
</dbReference>
<dbReference type="PANTHER" id="PTHR43261">
    <property type="entry name" value="TRANSLATION ELONGATION FACTOR G-RELATED"/>
    <property type="match status" value="1"/>
</dbReference>
<dbReference type="Pfam" id="PF00679">
    <property type="entry name" value="EFG_C"/>
    <property type="match status" value="1"/>
</dbReference>
<dbReference type="Pfam" id="PF14492">
    <property type="entry name" value="EFG_III"/>
    <property type="match status" value="1"/>
</dbReference>
<dbReference type="Pfam" id="PF03764">
    <property type="entry name" value="EFG_IV"/>
    <property type="match status" value="1"/>
</dbReference>
<dbReference type="Pfam" id="PF00009">
    <property type="entry name" value="GTP_EFTU"/>
    <property type="match status" value="1"/>
</dbReference>
<dbReference type="Pfam" id="PF03144">
    <property type="entry name" value="GTP_EFTU_D2"/>
    <property type="match status" value="1"/>
</dbReference>
<dbReference type="PRINTS" id="PR00315">
    <property type="entry name" value="ELONGATNFCT"/>
</dbReference>
<dbReference type="SMART" id="SM00838">
    <property type="entry name" value="EFG_C"/>
    <property type="match status" value="1"/>
</dbReference>
<dbReference type="SMART" id="SM00889">
    <property type="entry name" value="EFG_IV"/>
    <property type="match status" value="1"/>
</dbReference>
<dbReference type="SUPFAM" id="SSF54980">
    <property type="entry name" value="EF-G C-terminal domain-like"/>
    <property type="match status" value="2"/>
</dbReference>
<dbReference type="SUPFAM" id="SSF52540">
    <property type="entry name" value="P-loop containing nucleoside triphosphate hydrolases"/>
    <property type="match status" value="1"/>
</dbReference>
<dbReference type="SUPFAM" id="SSF54211">
    <property type="entry name" value="Ribosomal protein S5 domain 2-like"/>
    <property type="match status" value="1"/>
</dbReference>
<dbReference type="SUPFAM" id="SSF50447">
    <property type="entry name" value="Translation proteins"/>
    <property type="match status" value="1"/>
</dbReference>
<dbReference type="PROSITE" id="PS00301">
    <property type="entry name" value="G_TR_1"/>
    <property type="match status" value="1"/>
</dbReference>
<dbReference type="PROSITE" id="PS51722">
    <property type="entry name" value="G_TR_2"/>
    <property type="match status" value="1"/>
</dbReference>
<comment type="function">
    <text evidence="1">Catalyzes the GTP-dependent ribosomal translocation step during translation elongation. During this step, the ribosome changes from the pre-translocational (PRE) to the post-translocational (POST) state as the newly formed A-site-bound peptidyl-tRNA and P-site-bound deacylated tRNA move to the P and E sites, respectively. Catalyzes the coordinated movement of the two tRNA molecules, the mRNA and conformational changes in the ribosome.</text>
</comment>
<comment type="subcellular location">
    <subcellularLocation>
        <location evidence="1">Cytoplasm</location>
    </subcellularLocation>
</comment>
<comment type="similarity">
    <text evidence="1">Belongs to the TRAFAC class translation factor GTPase superfamily. Classic translation factor GTPase family. EF-G/EF-2 subfamily.</text>
</comment>
<proteinExistence type="inferred from homology"/>
<keyword id="KW-0963">Cytoplasm</keyword>
<keyword id="KW-0251">Elongation factor</keyword>
<keyword id="KW-0342">GTP-binding</keyword>
<keyword id="KW-0547">Nucleotide-binding</keyword>
<keyword id="KW-0648">Protein biosynthesis</keyword>
<keyword id="KW-1185">Reference proteome</keyword>
<feature type="chain" id="PRO_0000091266" description="Elongation factor G">
    <location>
        <begin position="1"/>
        <end position="705"/>
    </location>
</feature>
<feature type="domain" description="tr-type G">
    <location>
        <begin position="8"/>
        <end position="289"/>
    </location>
</feature>
<feature type="binding site" evidence="1">
    <location>
        <begin position="17"/>
        <end position="24"/>
    </location>
    <ligand>
        <name>GTP</name>
        <dbReference type="ChEBI" id="CHEBI:37565"/>
    </ligand>
</feature>
<feature type="binding site" evidence="1">
    <location>
        <begin position="88"/>
        <end position="92"/>
    </location>
    <ligand>
        <name>GTP</name>
        <dbReference type="ChEBI" id="CHEBI:37565"/>
    </ligand>
</feature>
<feature type="binding site" evidence="1">
    <location>
        <begin position="142"/>
        <end position="145"/>
    </location>
    <ligand>
        <name>GTP</name>
        <dbReference type="ChEBI" id="CHEBI:37565"/>
    </ligand>
</feature>
<sequence>MPRLTPIVNYRNIGISAHIDAGKTTTTERILFYTGVNHKLGEVHHGSATMDWMAQEQERGITITSAATTCFWSGMSNQFSSHRINIIDTPGHVDFTIEVERSMRILDGAIMVYCAVGGVQPQSETVWRQANKYNVPRIAFINKMDRTGANYFNVINQIKDKLYANPIPIQLPIGKENNFVGIIDLIKMKSIYWSEIDQGITFEYKEIPKDLMVLSNSYRNILLETSAEASEKLTEKYLYKNLTEQDIIEGLRIRSLKNEIIPVTCGSAFKNKGIQSMLDTVINYLPSPKDIKYSKKNKFLSKNYKKSILPKDNEPFSALAFKIANDPFVGNLTFFRVYSGKIRSGNTVLNSAKDKQERFGRIVQMHANKREEIKEVRSGDIAAAIGLKDVTTGDTLCDPLHPIILEKMEFPEPVISVAVEPKTKSDQEKMSSALNRLAKEDPSFRVSSDEESGQTIISGMGELHLEILIDRMYREFNVRSNVGKPQVSYRETIKSCVEEEGKFIRQSGGRGQFGHVWLRIEPNKSNIAKNKNNYTFINKIVGGAIPKEFIPAIDKGIQEQLSNGVLAGYPIVDVCVTVFDGSYHEVDSSEIAFKIAASIAFKSAFMKASPILLEPIMKVEVETPNEYMGDVIGDLNRRRGIIDGMQDINMGKIIISKIPLSEMFGYATDLRSQTQGRASYSMEFLRYNELPNNITESIINSNQLK</sequence>
<gene>
    <name evidence="1" type="primary">fusA</name>
    <name type="ordered locus">WIGBR0290</name>
</gene>
<evidence type="ECO:0000255" key="1">
    <source>
        <dbReference type="HAMAP-Rule" id="MF_00054"/>
    </source>
</evidence>
<name>EFG_WIGBR</name>